<feature type="chain" id="PRO_1000078983" description="Chorismate synthase">
    <location>
        <begin position="1"/>
        <end position="364"/>
    </location>
</feature>
<feature type="binding site" evidence="1">
    <location>
        <position position="47"/>
    </location>
    <ligand>
        <name>NADP(+)</name>
        <dbReference type="ChEBI" id="CHEBI:58349"/>
    </ligand>
</feature>
<feature type="binding site" evidence="1">
    <location>
        <position position="53"/>
    </location>
    <ligand>
        <name>NADP(+)</name>
        <dbReference type="ChEBI" id="CHEBI:58349"/>
    </ligand>
</feature>
<feature type="binding site" evidence="1">
    <location>
        <begin position="124"/>
        <end position="126"/>
    </location>
    <ligand>
        <name>FMN</name>
        <dbReference type="ChEBI" id="CHEBI:58210"/>
    </ligand>
</feature>
<feature type="binding site" evidence="1">
    <location>
        <position position="286"/>
    </location>
    <ligand>
        <name>FMN</name>
        <dbReference type="ChEBI" id="CHEBI:58210"/>
    </ligand>
</feature>
<feature type="binding site" evidence="1">
    <location>
        <begin position="301"/>
        <end position="305"/>
    </location>
    <ligand>
        <name>FMN</name>
        <dbReference type="ChEBI" id="CHEBI:58210"/>
    </ligand>
</feature>
<feature type="binding site" evidence="1">
    <location>
        <position position="327"/>
    </location>
    <ligand>
        <name>FMN</name>
        <dbReference type="ChEBI" id="CHEBI:58210"/>
    </ligand>
</feature>
<comment type="function">
    <text evidence="1">Catalyzes the anti-1,4-elimination of the C-3 phosphate and the C-6 proR hydrogen from 5-enolpyruvylshikimate-3-phosphate (EPSP) to yield chorismate, which is the branch point compound that serves as the starting substrate for the three terminal pathways of aromatic amino acid biosynthesis. This reaction introduces a second double bond into the aromatic ring system.</text>
</comment>
<comment type="catalytic activity">
    <reaction evidence="1">
        <text>5-O-(1-carboxyvinyl)-3-phosphoshikimate = chorismate + phosphate</text>
        <dbReference type="Rhea" id="RHEA:21020"/>
        <dbReference type="ChEBI" id="CHEBI:29748"/>
        <dbReference type="ChEBI" id="CHEBI:43474"/>
        <dbReference type="ChEBI" id="CHEBI:57701"/>
        <dbReference type="EC" id="4.2.3.5"/>
    </reaction>
</comment>
<comment type="cofactor">
    <cofactor evidence="1">
        <name>FMNH2</name>
        <dbReference type="ChEBI" id="CHEBI:57618"/>
    </cofactor>
    <text evidence="1">Reduced FMN (FMNH(2)).</text>
</comment>
<comment type="pathway">
    <text evidence="1">Metabolic intermediate biosynthesis; chorismate biosynthesis; chorismate from D-erythrose 4-phosphate and phosphoenolpyruvate: step 7/7.</text>
</comment>
<comment type="subunit">
    <text evidence="1">Homotetramer.</text>
</comment>
<comment type="similarity">
    <text evidence="1">Belongs to the chorismate synthase family.</text>
</comment>
<organism>
    <name type="scientific">Acaryochloris marina (strain MBIC 11017)</name>
    <dbReference type="NCBI Taxonomy" id="329726"/>
    <lineage>
        <taxon>Bacteria</taxon>
        <taxon>Bacillati</taxon>
        <taxon>Cyanobacteriota</taxon>
        <taxon>Cyanophyceae</taxon>
        <taxon>Acaryochloridales</taxon>
        <taxon>Acaryochloridaceae</taxon>
        <taxon>Acaryochloris</taxon>
    </lineage>
</organism>
<evidence type="ECO:0000255" key="1">
    <source>
        <dbReference type="HAMAP-Rule" id="MF_00300"/>
    </source>
</evidence>
<gene>
    <name evidence="1" type="primary">aroC</name>
    <name type="ordered locus">AM1_1139</name>
</gene>
<accession>B0C2W2</accession>
<proteinExistence type="inferred from homology"/>
<reference key="1">
    <citation type="journal article" date="2008" name="Proc. Natl. Acad. Sci. U.S.A.">
        <title>Niche adaptation and genome expansion in the chlorophyll d-producing cyanobacterium Acaryochloris marina.</title>
        <authorList>
            <person name="Swingley W.D."/>
            <person name="Chen M."/>
            <person name="Cheung P.C."/>
            <person name="Conrad A.L."/>
            <person name="Dejesa L.C."/>
            <person name="Hao J."/>
            <person name="Honchak B.M."/>
            <person name="Karbach L.E."/>
            <person name="Kurdoglu A."/>
            <person name="Lahiri S."/>
            <person name="Mastrian S.D."/>
            <person name="Miyashita H."/>
            <person name="Page L."/>
            <person name="Ramakrishna P."/>
            <person name="Satoh S."/>
            <person name="Sattley W.M."/>
            <person name="Shimada Y."/>
            <person name="Taylor H.L."/>
            <person name="Tomo T."/>
            <person name="Tsuchiya T."/>
            <person name="Wang Z.T."/>
            <person name="Raymond J."/>
            <person name="Mimuro M."/>
            <person name="Blankenship R.E."/>
            <person name="Touchman J.W."/>
        </authorList>
    </citation>
    <scope>NUCLEOTIDE SEQUENCE [LARGE SCALE GENOMIC DNA]</scope>
    <source>
        <strain>MBIC 11017</strain>
    </source>
</reference>
<dbReference type="EC" id="4.2.3.5" evidence="1"/>
<dbReference type="EMBL" id="CP000828">
    <property type="protein sequence ID" value="ABW26178.1"/>
    <property type="molecule type" value="Genomic_DNA"/>
</dbReference>
<dbReference type="RefSeq" id="WP_012161728.1">
    <property type="nucleotide sequence ID" value="NC_009925.1"/>
</dbReference>
<dbReference type="SMR" id="B0C2W2"/>
<dbReference type="STRING" id="329726.AM1_1139"/>
<dbReference type="KEGG" id="amr:AM1_1139"/>
<dbReference type="eggNOG" id="COG0082">
    <property type="taxonomic scope" value="Bacteria"/>
</dbReference>
<dbReference type="HOGENOM" id="CLU_034547_0_1_3"/>
<dbReference type="OrthoDB" id="9771806at2"/>
<dbReference type="UniPathway" id="UPA00053">
    <property type="reaction ID" value="UER00090"/>
</dbReference>
<dbReference type="Proteomes" id="UP000000268">
    <property type="component" value="Chromosome"/>
</dbReference>
<dbReference type="GO" id="GO:0005829">
    <property type="term" value="C:cytosol"/>
    <property type="evidence" value="ECO:0007669"/>
    <property type="project" value="TreeGrafter"/>
</dbReference>
<dbReference type="GO" id="GO:0004107">
    <property type="term" value="F:chorismate synthase activity"/>
    <property type="evidence" value="ECO:0007669"/>
    <property type="project" value="UniProtKB-UniRule"/>
</dbReference>
<dbReference type="GO" id="GO:0010181">
    <property type="term" value="F:FMN binding"/>
    <property type="evidence" value="ECO:0007669"/>
    <property type="project" value="TreeGrafter"/>
</dbReference>
<dbReference type="GO" id="GO:0008652">
    <property type="term" value="P:amino acid biosynthetic process"/>
    <property type="evidence" value="ECO:0007669"/>
    <property type="project" value="UniProtKB-KW"/>
</dbReference>
<dbReference type="GO" id="GO:0009073">
    <property type="term" value="P:aromatic amino acid family biosynthetic process"/>
    <property type="evidence" value="ECO:0007669"/>
    <property type="project" value="UniProtKB-KW"/>
</dbReference>
<dbReference type="GO" id="GO:0009423">
    <property type="term" value="P:chorismate biosynthetic process"/>
    <property type="evidence" value="ECO:0007669"/>
    <property type="project" value="UniProtKB-UniRule"/>
</dbReference>
<dbReference type="CDD" id="cd07304">
    <property type="entry name" value="Chorismate_synthase"/>
    <property type="match status" value="1"/>
</dbReference>
<dbReference type="FunFam" id="3.60.150.10:FF:000003">
    <property type="entry name" value="Chorismate synthase"/>
    <property type="match status" value="1"/>
</dbReference>
<dbReference type="Gene3D" id="3.60.150.10">
    <property type="entry name" value="Chorismate synthase AroC"/>
    <property type="match status" value="1"/>
</dbReference>
<dbReference type="HAMAP" id="MF_00300">
    <property type="entry name" value="Chorismate_synth"/>
    <property type="match status" value="1"/>
</dbReference>
<dbReference type="InterPro" id="IPR000453">
    <property type="entry name" value="Chorismate_synth"/>
</dbReference>
<dbReference type="InterPro" id="IPR035904">
    <property type="entry name" value="Chorismate_synth_AroC_sf"/>
</dbReference>
<dbReference type="InterPro" id="IPR020541">
    <property type="entry name" value="Chorismate_synthase_CS"/>
</dbReference>
<dbReference type="NCBIfam" id="TIGR00033">
    <property type="entry name" value="aroC"/>
    <property type="match status" value="1"/>
</dbReference>
<dbReference type="NCBIfam" id="NF003793">
    <property type="entry name" value="PRK05382.1"/>
    <property type="match status" value="1"/>
</dbReference>
<dbReference type="PANTHER" id="PTHR21085">
    <property type="entry name" value="CHORISMATE SYNTHASE"/>
    <property type="match status" value="1"/>
</dbReference>
<dbReference type="PANTHER" id="PTHR21085:SF0">
    <property type="entry name" value="CHORISMATE SYNTHASE"/>
    <property type="match status" value="1"/>
</dbReference>
<dbReference type="Pfam" id="PF01264">
    <property type="entry name" value="Chorismate_synt"/>
    <property type="match status" value="1"/>
</dbReference>
<dbReference type="PIRSF" id="PIRSF001456">
    <property type="entry name" value="Chorismate_synth"/>
    <property type="match status" value="1"/>
</dbReference>
<dbReference type="SUPFAM" id="SSF103263">
    <property type="entry name" value="Chorismate synthase, AroC"/>
    <property type="match status" value="1"/>
</dbReference>
<dbReference type="PROSITE" id="PS00787">
    <property type="entry name" value="CHORISMATE_SYNTHASE_1"/>
    <property type="match status" value="1"/>
</dbReference>
<dbReference type="PROSITE" id="PS00788">
    <property type="entry name" value="CHORISMATE_SYNTHASE_2"/>
    <property type="match status" value="1"/>
</dbReference>
<dbReference type="PROSITE" id="PS00789">
    <property type="entry name" value="CHORISMATE_SYNTHASE_3"/>
    <property type="match status" value="1"/>
</dbReference>
<keyword id="KW-0028">Amino-acid biosynthesis</keyword>
<keyword id="KW-0057">Aromatic amino acid biosynthesis</keyword>
<keyword id="KW-0274">FAD</keyword>
<keyword id="KW-0285">Flavoprotein</keyword>
<keyword id="KW-0288">FMN</keyword>
<keyword id="KW-0456">Lyase</keyword>
<keyword id="KW-0521">NADP</keyword>
<keyword id="KW-1185">Reference proteome</keyword>
<protein>
    <recommendedName>
        <fullName evidence="1">Chorismate synthase</fullName>
        <shortName evidence="1">CS</shortName>
        <ecNumber evidence="1">4.2.3.5</ecNumber>
    </recommendedName>
    <alternativeName>
        <fullName evidence="1">5-enolpyruvylshikimate-3-phosphate phospholyase</fullName>
    </alternativeName>
</protein>
<name>AROC_ACAM1</name>
<sequence length="364" mass="39234">MGNTFGHLFRITTFGESHGGGVGVVIDGCPPQIEIAAEDIQFELDRRRPGQSRITTPRKETDTCEIVSGMFQGKTLGTPITILVRNKDTRPQDYSEMAQVYRPSHADATYDAKYGIRNWQGGGRSSARETIGRVAAGAIAKKILQQAAGVEVIGYVKRIKTVEADIDPDQVTLAQVEANMVRCPNPETAEEMIDLIDQTRRDANSIGGVVECVARQVPKGLGAPVFDKLEAELAKAVMSLPACKGFEIGSGFAGTQLTGLEHNDEFYTDETGRIRTVTNRSGGIQGGISNGENIVLRAAFKPTATIGKPQKTVNQAGEATTLAAKGRHDPCVLPRAVPMVEAMVALVLCDHLLRHHAQCELLTE</sequence>